<feature type="chain" id="PRO_0000121272" description="Ras-related protein Rab-14">
    <location>
        <begin position="1"/>
        <end position="206"/>
    </location>
</feature>
<feature type="region of interest" description="Disordered" evidence="3">
    <location>
        <begin position="182"/>
        <end position="206"/>
    </location>
</feature>
<feature type="short sequence motif" description="Effector region" evidence="1">
    <location>
        <begin position="37"/>
        <end position="45"/>
    </location>
</feature>
<feature type="compositionally biased region" description="Polar residues" evidence="3">
    <location>
        <begin position="189"/>
        <end position="206"/>
    </location>
</feature>
<feature type="binding site" evidence="1">
    <location>
        <begin position="15"/>
        <end position="22"/>
    </location>
    <ligand>
        <name>GTP</name>
        <dbReference type="ChEBI" id="CHEBI:37565"/>
    </ligand>
</feature>
<feature type="binding site" evidence="1">
    <location>
        <begin position="63"/>
        <end position="67"/>
    </location>
    <ligand>
        <name>GTP</name>
        <dbReference type="ChEBI" id="CHEBI:37565"/>
    </ligand>
</feature>
<feature type="binding site" evidence="1">
    <location>
        <begin position="121"/>
        <end position="124"/>
    </location>
    <ligand>
        <name>GTP</name>
        <dbReference type="ChEBI" id="CHEBI:37565"/>
    </ligand>
</feature>
<feature type="modified residue" description="Cysteine methyl ester" evidence="1">
    <location>
        <position position="206"/>
    </location>
</feature>
<feature type="lipid moiety-binding region" description="S-geranylgeranyl cysteine" evidence="1">
    <location>
        <position position="204"/>
    </location>
</feature>
<feature type="lipid moiety-binding region" description="S-geranylgeranyl cysteine" evidence="1">
    <location>
        <position position="206"/>
    </location>
</feature>
<feature type="mutagenesis site" description="Constitutively active." evidence="4">
    <original>Q</original>
    <variation>L</variation>
    <location>
        <position position="67"/>
    </location>
</feature>
<feature type="mutagenesis site" description="Constitutively inactive." evidence="4">
    <original>N</original>
    <variation>I</variation>
    <location>
        <position position="121"/>
    </location>
</feature>
<reference key="1">
    <citation type="journal article" date="1994" name="J. Cell Sci.">
        <title>A Rab4-like GTPase in Dictyostelium discoideum colocalizes with V-H(+)-ATPases in reticular membranes of the contractile vacuole complex and in lysosomes.</title>
        <authorList>
            <person name="Bush J.M. IV"/>
            <person name="Nolta K."/>
            <person name="Rodriguez-Paris J."/>
            <person name="Kaufmann N."/>
            <person name="O'Halloran T."/>
            <person name="Ruscetti T."/>
            <person name="Temesvari L."/>
            <person name="Steck T."/>
            <person name="Cardelli J.A."/>
        </authorList>
    </citation>
    <scope>NUCLEOTIDE SEQUENCE [MRNA]</scope>
    <source>
        <strain>AX3</strain>
    </source>
</reference>
<reference key="2">
    <citation type="journal article" date="2005" name="Nature">
        <title>The genome of the social amoeba Dictyostelium discoideum.</title>
        <authorList>
            <person name="Eichinger L."/>
            <person name="Pachebat J.A."/>
            <person name="Gloeckner G."/>
            <person name="Rajandream M.A."/>
            <person name="Sucgang R."/>
            <person name="Berriman M."/>
            <person name="Song J."/>
            <person name="Olsen R."/>
            <person name="Szafranski K."/>
            <person name="Xu Q."/>
            <person name="Tunggal B."/>
            <person name="Kummerfeld S."/>
            <person name="Madera M."/>
            <person name="Konfortov B.A."/>
            <person name="Rivero F."/>
            <person name="Bankier A.T."/>
            <person name="Lehmann R."/>
            <person name="Hamlin N."/>
            <person name="Davies R."/>
            <person name="Gaudet P."/>
            <person name="Fey P."/>
            <person name="Pilcher K."/>
            <person name="Chen G."/>
            <person name="Saunders D."/>
            <person name="Sodergren E.J."/>
            <person name="Davis P."/>
            <person name="Kerhornou A."/>
            <person name="Nie X."/>
            <person name="Hall N."/>
            <person name="Anjard C."/>
            <person name="Hemphill L."/>
            <person name="Bason N."/>
            <person name="Farbrother P."/>
            <person name="Desany B."/>
            <person name="Just E."/>
            <person name="Morio T."/>
            <person name="Rost R."/>
            <person name="Churcher C.M."/>
            <person name="Cooper J."/>
            <person name="Haydock S."/>
            <person name="van Driessche N."/>
            <person name="Cronin A."/>
            <person name="Goodhead I."/>
            <person name="Muzny D.M."/>
            <person name="Mourier T."/>
            <person name="Pain A."/>
            <person name="Lu M."/>
            <person name="Harper D."/>
            <person name="Lindsay R."/>
            <person name="Hauser H."/>
            <person name="James K.D."/>
            <person name="Quiles M."/>
            <person name="Madan Babu M."/>
            <person name="Saito T."/>
            <person name="Buchrieser C."/>
            <person name="Wardroper A."/>
            <person name="Felder M."/>
            <person name="Thangavelu M."/>
            <person name="Johnson D."/>
            <person name="Knights A."/>
            <person name="Loulseged H."/>
            <person name="Mungall K.L."/>
            <person name="Oliver K."/>
            <person name="Price C."/>
            <person name="Quail M.A."/>
            <person name="Urushihara H."/>
            <person name="Hernandez J."/>
            <person name="Rabbinowitsch E."/>
            <person name="Steffen D."/>
            <person name="Sanders M."/>
            <person name="Ma J."/>
            <person name="Kohara Y."/>
            <person name="Sharp S."/>
            <person name="Simmonds M.N."/>
            <person name="Spiegler S."/>
            <person name="Tivey A."/>
            <person name="Sugano S."/>
            <person name="White B."/>
            <person name="Walker D."/>
            <person name="Woodward J.R."/>
            <person name="Winckler T."/>
            <person name="Tanaka Y."/>
            <person name="Shaulsky G."/>
            <person name="Schleicher M."/>
            <person name="Weinstock G.M."/>
            <person name="Rosenthal A."/>
            <person name="Cox E.C."/>
            <person name="Chisholm R.L."/>
            <person name="Gibbs R.A."/>
            <person name="Loomis W.F."/>
            <person name="Platzer M."/>
            <person name="Kay R.R."/>
            <person name="Williams J.G."/>
            <person name="Dear P.H."/>
            <person name="Noegel A.A."/>
            <person name="Barrell B.G."/>
            <person name="Kuspa A."/>
        </authorList>
    </citation>
    <scope>NUCLEOTIDE SEQUENCE [LARGE SCALE GENOMIC DNA]</scope>
    <source>
        <strain>AX4</strain>
    </source>
</reference>
<reference key="3">
    <citation type="journal article" date="1996" name="Mol. Biol. Cell">
        <title>A role for a Rab4-like GTPase in endocytosis and in regulation of contractile vacuole structure and function in Dictyostelium discoideum.</title>
        <authorList>
            <person name="Bush J."/>
            <person name="Temesvari L."/>
            <person name="Rodriguez-Paris J."/>
            <person name="Buczynski G."/>
            <person name="Cardelli J."/>
        </authorList>
    </citation>
    <scope>FUNCTION</scope>
    <scope>SUBCELLULAR LOCATION</scope>
</reference>
<reference key="4">
    <citation type="journal article" date="2002" name="J. Cell Sci.">
        <title>RabD, a Dictyostelium Rab14-related GTPase, regulates phagocytosis and homotypic phagosome and lysosome fusion.</title>
        <authorList>
            <person name="Harris E."/>
            <person name="Cardelli J."/>
        </authorList>
    </citation>
    <scope>FUNCTION</scope>
    <scope>SUBCELLULAR LOCATION</scope>
    <scope>MUTAGENESIS OF GLN-67 AND ASN-121</scope>
</reference>
<dbReference type="EC" id="3.6.5.2" evidence="2"/>
<dbReference type="EMBL" id="U02927">
    <property type="protein sequence ID" value="AAA80151.1"/>
    <property type="status" value="ALT_FRAME"/>
    <property type="molecule type" value="mRNA"/>
</dbReference>
<dbReference type="EMBL" id="AAFI02000040">
    <property type="protein sequence ID" value="EAL66754.1"/>
    <property type="molecule type" value="Genomic_DNA"/>
</dbReference>
<dbReference type="RefSeq" id="XP_640740.1">
    <property type="nucleotide sequence ID" value="XM_635648.1"/>
</dbReference>
<dbReference type="SMR" id="P36410"/>
<dbReference type="FunCoup" id="P36410">
    <property type="interactions" value="358"/>
</dbReference>
<dbReference type="IntAct" id="P36410">
    <property type="interactions" value="1"/>
</dbReference>
<dbReference type="MINT" id="P36410"/>
<dbReference type="STRING" id="44689.P36410"/>
<dbReference type="GlyGen" id="P36410">
    <property type="glycosylation" value="1 site"/>
</dbReference>
<dbReference type="PaxDb" id="44689-DDB0214821"/>
<dbReference type="EnsemblProtists" id="EAL66754">
    <property type="protein sequence ID" value="EAL66754"/>
    <property type="gene ID" value="DDB_G0281337"/>
</dbReference>
<dbReference type="GeneID" id="8623016"/>
<dbReference type="KEGG" id="ddi:DDB_G0281337"/>
<dbReference type="dictyBase" id="DDB_G0281337">
    <property type="gene designation" value="rab14"/>
</dbReference>
<dbReference type="VEuPathDB" id="AmoebaDB:DDB_G0281337"/>
<dbReference type="eggNOG" id="KOG0097">
    <property type="taxonomic scope" value="Eukaryota"/>
</dbReference>
<dbReference type="HOGENOM" id="CLU_041217_23_1_1"/>
<dbReference type="InParanoid" id="P36410"/>
<dbReference type="OMA" id="ANGVMQY"/>
<dbReference type="PhylomeDB" id="P36410"/>
<dbReference type="Reactome" id="R-DDI-6798695">
    <property type="pathway name" value="Neutrophil degranulation"/>
</dbReference>
<dbReference type="Reactome" id="R-DDI-8873719">
    <property type="pathway name" value="RAB geranylgeranylation"/>
</dbReference>
<dbReference type="Reactome" id="R-DDI-8876198">
    <property type="pathway name" value="RAB GEFs exchange GTP for GDP on RABs"/>
</dbReference>
<dbReference type="PRO" id="PR:P36410"/>
<dbReference type="Proteomes" id="UP000002195">
    <property type="component" value="Chromosome 3"/>
</dbReference>
<dbReference type="GO" id="GO:0031164">
    <property type="term" value="C:contractile vacuolar membrane"/>
    <property type="evidence" value="ECO:0000314"/>
    <property type="project" value="dictyBase"/>
</dbReference>
<dbReference type="GO" id="GO:0005829">
    <property type="term" value="C:cytosol"/>
    <property type="evidence" value="ECO:0007669"/>
    <property type="project" value="GOC"/>
</dbReference>
<dbReference type="GO" id="GO:0005769">
    <property type="term" value="C:early endosome"/>
    <property type="evidence" value="ECO:0000318"/>
    <property type="project" value="GO_Central"/>
</dbReference>
<dbReference type="GO" id="GO:0012505">
    <property type="term" value="C:endomembrane system"/>
    <property type="evidence" value="ECO:0000318"/>
    <property type="project" value="GO_Central"/>
</dbReference>
<dbReference type="GO" id="GO:0005811">
    <property type="term" value="C:lipid droplet"/>
    <property type="evidence" value="ECO:0007005"/>
    <property type="project" value="dictyBase"/>
</dbReference>
<dbReference type="GO" id="GO:0005765">
    <property type="term" value="C:lysosomal membrane"/>
    <property type="evidence" value="ECO:0000314"/>
    <property type="project" value="dictyBase"/>
</dbReference>
<dbReference type="GO" id="GO:0005764">
    <property type="term" value="C:lysosome"/>
    <property type="evidence" value="ECO:0000314"/>
    <property type="project" value="dictyBase"/>
</dbReference>
<dbReference type="GO" id="GO:0140220">
    <property type="term" value="C:pathogen-containing vacuole"/>
    <property type="evidence" value="ECO:0000314"/>
    <property type="project" value="dictyBase"/>
</dbReference>
<dbReference type="GO" id="GO:0045335">
    <property type="term" value="C:phagocytic vesicle"/>
    <property type="evidence" value="ECO:0000314"/>
    <property type="project" value="dictyBase"/>
</dbReference>
<dbReference type="GO" id="GO:0055037">
    <property type="term" value="C:recycling endosome"/>
    <property type="evidence" value="ECO:0007669"/>
    <property type="project" value="InterPro"/>
</dbReference>
<dbReference type="GO" id="GO:0062160">
    <property type="term" value="C:spongiome"/>
    <property type="evidence" value="ECO:0000314"/>
    <property type="project" value="dictyBase"/>
</dbReference>
<dbReference type="GO" id="GO:0005802">
    <property type="term" value="C:trans-Golgi network"/>
    <property type="evidence" value="ECO:0007669"/>
    <property type="project" value="InterPro"/>
</dbReference>
<dbReference type="GO" id="GO:0005525">
    <property type="term" value="F:GTP binding"/>
    <property type="evidence" value="ECO:0007669"/>
    <property type="project" value="UniProtKB-KW"/>
</dbReference>
<dbReference type="GO" id="GO:0003924">
    <property type="term" value="F:GTPase activity"/>
    <property type="evidence" value="ECO:0000318"/>
    <property type="project" value="GO_Central"/>
</dbReference>
<dbReference type="GO" id="GO:0033298">
    <property type="term" value="P:contractile vacuole organization"/>
    <property type="evidence" value="ECO:0000315"/>
    <property type="project" value="dictyBase"/>
</dbReference>
<dbReference type="GO" id="GO:0042742">
    <property type="term" value="P:defense response to bacterium"/>
    <property type="evidence" value="ECO:0007669"/>
    <property type="project" value="InterPro"/>
</dbReference>
<dbReference type="GO" id="GO:0032456">
    <property type="term" value="P:endocytic recycling"/>
    <property type="evidence" value="ECO:0007669"/>
    <property type="project" value="InterPro"/>
</dbReference>
<dbReference type="GO" id="GO:0006895">
    <property type="term" value="P:Golgi to endosome transport"/>
    <property type="evidence" value="ECO:0000318"/>
    <property type="project" value="GO_Central"/>
</dbReference>
<dbReference type="GO" id="GO:0006971">
    <property type="term" value="P:hypotonic response"/>
    <property type="evidence" value="ECO:0007007"/>
    <property type="project" value="dictyBase"/>
</dbReference>
<dbReference type="GO" id="GO:0006886">
    <property type="term" value="P:intracellular protein transport"/>
    <property type="evidence" value="ECO:0000318"/>
    <property type="project" value="GO_Central"/>
</dbReference>
<dbReference type="GO" id="GO:0090382">
    <property type="term" value="P:phagosome maturation"/>
    <property type="evidence" value="ECO:0007669"/>
    <property type="project" value="InterPro"/>
</dbReference>
<dbReference type="GO" id="GO:1905364">
    <property type="term" value="P:regulation of endosomal vesicle fusion"/>
    <property type="evidence" value="ECO:0000315"/>
    <property type="project" value="dictyBase"/>
</dbReference>
<dbReference type="GO" id="GO:0048548">
    <property type="term" value="P:regulation of pinocytosis"/>
    <property type="evidence" value="ECO:0000315"/>
    <property type="project" value="dictyBase"/>
</dbReference>
<dbReference type="GO" id="GO:0006970">
    <property type="term" value="P:response to osmotic stress"/>
    <property type="evidence" value="ECO:0000315"/>
    <property type="project" value="dictyBase"/>
</dbReference>
<dbReference type="CDD" id="cd04122">
    <property type="entry name" value="Rab14"/>
    <property type="match status" value="1"/>
</dbReference>
<dbReference type="FunFam" id="3.40.50.300:FF:001193">
    <property type="entry name" value="Rab family, other"/>
    <property type="match status" value="1"/>
</dbReference>
<dbReference type="Gene3D" id="3.40.50.300">
    <property type="entry name" value="P-loop containing nucleotide triphosphate hydrolases"/>
    <property type="match status" value="1"/>
</dbReference>
<dbReference type="InterPro" id="IPR027417">
    <property type="entry name" value="P-loop_NTPase"/>
</dbReference>
<dbReference type="InterPro" id="IPR030702">
    <property type="entry name" value="Rab14"/>
</dbReference>
<dbReference type="InterPro" id="IPR050209">
    <property type="entry name" value="Rab_GTPases_membrane_traffic"/>
</dbReference>
<dbReference type="InterPro" id="IPR005225">
    <property type="entry name" value="Small_GTP-bd"/>
</dbReference>
<dbReference type="InterPro" id="IPR001806">
    <property type="entry name" value="Small_GTPase"/>
</dbReference>
<dbReference type="NCBIfam" id="TIGR00231">
    <property type="entry name" value="small_GTP"/>
    <property type="match status" value="1"/>
</dbReference>
<dbReference type="PANTHER" id="PTHR47979">
    <property type="entry name" value="DRAB11-RELATED"/>
    <property type="match status" value="1"/>
</dbReference>
<dbReference type="Pfam" id="PF00071">
    <property type="entry name" value="Ras"/>
    <property type="match status" value="1"/>
</dbReference>
<dbReference type="PRINTS" id="PR00449">
    <property type="entry name" value="RASTRNSFRMNG"/>
</dbReference>
<dbReference type="SMART" id="SM00175">
    <property type="entry name" value="RAB"/>
    <property type="match status" value="1"/>
</dbReference>
<dbReference type="SMART" id="SM00176">
    <property type="entry name" value="RAN"/>
    <property type="match status" value="1"/>
</dbReference>
<dbReference type="SMART" id="SM00173">
    <property type="entry name" value="RAS"/>
    <property type="match status" value="1"/>
</dbReference>
<dbReference type="SMART" id="SM00174">
    <property type="entry name" value="RHO"/>
    <property type="match status" value="1"/>
</dbReference>
<dbReference type="SUPFAM" id="SSF52540">
    <property type="entry name" value="P-loop containing nucleoside triphosphate hydrolases"/>
    <property type="match status" value="1"/>
</dbReference>
<dbReference type="PROSITE" id="PS51419">
    <property type="entry name" value="RAB"/>
    <property type="match status" value="1"/>
</dbReference>
<keyword id="KW-0967">Endosome</keyword>
<keyword id="KW-0342">GTP-binding</keyword>
<keyword id="KW-0378">Hydrolase</keyword>
<keyword id="KW-0449">Lipoprotein</keyword>
<keyword id="KW-0472">Membrane</keyword>
<keyword id="KW-0488">Methylation</keyword>
<keyword id="KW-0547">Nucleotide-binding</keyword>
<keyword id="KW-0636">Prenylation</keyword>
<keyword id="KW-1185">Reference proteome</keyword>
<keyword id="KW-0926">Vacuole</keyword>
<name>RAB14_DICDI</name>
<proteinExistence type="evidence at protein level"/>
<organism>
    <name type="scientific">Dictyostelium discoideum</name>
    <name type="common">Social amoeba</name>
    <dbReference type="NCBI Taxonomy" id="44689"/>
    <lineage>
        <taxon>Eukaryota</taxon>
        <taxon>Amoebozoa</taxon>
        <taxon>Evosea</taxon>
        <taxon>Eumycetozoa</taxon>
        <taxon>Dictyostelia</taxon>
        <taxon>Dictyosteliales</taxon>
        <taxon>Dictyosteliaceae</taxon>
        <taxon>Dictyostelium</taxon>
    </lineage>
</organism>
<gene>
    <name type="primary">rab14</name>
    <name type="synonym">rab4</name>
    <name type="synonym">rabD</name>
    <name type="ORF">DDB_G0281337</name>
</gene>
<sequence length="206" mass="23135">MSFPYEYIFKYIIIGDMGVGKSCLLHQFTENKFVPDSPHTIGVEFGTRIVDVNNKKIKLQIWDTAGQERFRAVTRSYYRGAAGALLVYDITRRITYNHLTTWLTDARNLTNPNTVIMLIGNKKDLEGQRDVTYEEASAFAKQNGLIFVESSAKTGENVEEAFLRTAKLIFQSVQEGNVDLIPDGGITKNPPQTITDKPQDASKCSC</sequence>
<comment type="function">
    <text evidence="4 5 6">The small GTPases Rab are key regulators of intracellular membrane trafficking, from the formation of transport vesicles to their fusion with membranes. Rabs cycle between an inactive GDP-bound form and an active GTP-bound form that is able to recruit to membranes different set of downstream effectors directly responsible for vesicle formation, movement, tethering and fusion (Probable). Regulates the fusion of phagosomes and lysosomes.</text>
</comment>
<comment type="catalytic activity">
    <reaction evidence="2">
        <text>GTP + H2O = GDP + phosphate + H(+)</text>
        <dbReference type="Rhea" id="RHEA:19669"/>
        <dbReference type="ChEBI" id="CHEBI:15377"/>
        <dbReference type="ChEBI" id="CHEBI:15378"/>
        <dbReference type="ChEBI" id="CHEBI:37565"/>
        <dbReference type="ChEBI" id="CHEBI:43474"/>
        <dbReference type="ChEBI" id="CHEBI:58189"/>
        <dbReference type="EC" id="3.6.5.2"/>
    </reaction>
    <physiologicalReaction direction="left-to-right" evidence="2">
        <dbReference type="Rhea" id="RHEA:19670"/>
    </physiologicalReaction>
</comment>
<comment type="activity regulation">
    <text evidence="2">Rab activation is generally mediated by a guanine exchange factor (GEF), while inactivation through hydrolysis of bound GTP is catalyzed by a GTPase activating protein (GAP). That Rab is activated by the DENND6A and DENND6B guanine exchange factors (GEF).</text>
</comment>
<comment type="subcellular location">
    <subcellularLocation>
        <location evidence="4 5">Endosome</location>
    </subcellularLocation>
    <subcellularLocation>
        <location evidence="4 5">Contractile vacuole</location>
    </subcellularLocation>
    <subcellularLocation>
        <location evidence="4">Membrane</location>
        <topology evidence="6">Lipid-anchor</topology>
    </subcellularLocation>
    <text evidence="4 5">Endosomal pathway and the contractile vacuole membrane system.</text>
</comment>
<comment type="similarity">
    <text evidence="6">Belongs to the small GTPase superfamily. Rab family.</text>
</comment>
<comment type="sequence caution" evidence="6">
    <conflict type="frameshift">
        <sequence resource="EMBL-CDS" id="AAA80151"/>
    </conflict>
</comment>
<evidence type="ECO:0000250" key="1"/>
<evidence type="ECO:0000250" key="2">
    <source>
        <dbReference type="UniProtKB" id="P61106"/>
    </source>
</evidence>
<evidence type="ECO:0000256" key="3">
    <source>
        <dbReference type="SAM" id="MobiDB-lite"/>
    </source>
</evidence>
<evidence type="ECO:0000269" key="4">
    <source>
    </source>
</evidence>
<evidence type="ECO:0000269" key="5">
    <source>
    </source>
</evidence>
<evidence type="ECO:0000305" key="6"/>
<protein>
    <recommendedName>
        <fullName>Ras-related protein Rab-14</fullName>
        <ecNumber evidence="2">3.6.5.2</ecNumber>
    </recommendedName>
    <alternativeName>
        <fullName>Rab4-like GTPase</fullName>
    </alternativeName>
</protein>
<accession>P36410</accession>
<accession>Q54U25</accession>